<organism>
    <name type="scientific">Methanocaldococcus jannaschii (strain ATCC 43067 / DSM 2661 / JAL-1 / JCM 10045 / NBRC 100440)</name>
    <name type="common">Methanococcus jannaschii</name>
    <dbReference type="NCBI Taxonomy" id="243232"/>
    <lineage>
        <taxon>Archaea</taxon>
        <taxon>Methanobacteriati</taxon>
        <taxon>Methanobacteriota</taxon>
        <taxon>Methanomada group</taxon>
        <taxon>Methanococci</taxon>
        <taxon>Methanococcales</taxon>
        <taxon>Methanocaldococcaceae</taxon>
        <taxon>Methanocaldococcus</taxon>
    </lineage>
</organism>
<evidence type="ECO:0000250" key="1"/>
<evidence type="ECO:0000305" key="2"/>
<proteinExistence type="inferred from homology"/>
<dbReference type="EC" id="2.1.1.151"/>
<dbReference type="EMBL" id="L77117">
    <property type="protein sequence ID" value="AAB98764.1"/>
    <property type="molecule type" value="Genomic_DNA"/>
</dbReference>
<dbReference type="PIR" id="C64396">
    <property type="entry name" value="C64396"/>
</dbReference>
<dbReference type="RefSeq" id="WP_010870276.1">
    <property type="nucleotide sequence ID" value="NC_000909.1"/>
</dbReference>
<dbReference type="SMR" id="Q58181"/>
<dbReference type="FunCoup" id="Q58181">
    <property type="interactions" value="110"/>
</dbReference>
<dbReference type="STRING" id="243232.MJ_0771"/>
<dbReference type="PaxDb" id="243232-MJ_0771"/>
<dbReference type="EnsemblBacteria" id="AAB98764">
    <property type="protein sequence ID" value="AAB98764"/>
    <property type="gene ID" value="MJ_0771"/>
</dbReference>
<dbReference type="GeneID" id="1451648"/>
<dbReference type="KEGG" id="mja:MJ_0771"/>
<dbReference type="eggNOG" id="arCOG00648">
    <property type="taxonomic scope" value="Archaea"/>
</dbReference>
<dbReference type="HOGENOM" id="CLU_076014_2_1_2"/>
<dbReference type="InParanoid" id="Q58181"/>
<dbReference type="OrthoDB" id="23546at2157"/>
<dbReference type="PhylomeDB" id="Q58181"/>
<dbReference type="UniPathway" id="UPA00148">
    <property type="reaction ID" value="UER00224"/>
</dbReference>
<dbReference type="Proteomes" id="UP000000805">
    <property type="component" value="Chromosome"/>
</dbReference>
<dbReference type="GO" id="GO:0043781">
    <property type="term" value="F:cobalt-factor II C20-methyltransferase activity"/>
    <property type="evidence" value="ECO:0007669"/>
    <property type="project" value="UniProtKB-EC"/>
</dbReference>
<dbReference type="GO" id="GO:0030788">
    <property type="term" value="F:precorrin-2 C20-methyltransferase activity"/>
    <property type="evidence" value="ECO:0007669"/>
    <property type="project" value="InterPro"/>
</dbReference>
<dbReference type="GO" id="GO:0009236">
    <property type="term" value="P:cobalamin biosynthetic process"/>
    <property type="evidence" value="ECO:0007669"/>
    <property type="project" value="UniProtKB-UniPathway"/>
</dbReference>
<dbReference type="GO" id="GO:0032259">
    <property type="term" value="P:methylation"/>
    <property type="evidence" value="ECO:0007669"/>
    <property type="project" value="UniProtKB-KW"/>
</dbReference>
<dbReference type="CDD" id="cd11645">
    <property type="entry name" value="Precorrin_2_C20_MT"/>
    <property type="match status" value="1"/>
</dbReference>
<dbReference type="Gene3D" id="3.40.1010.10">
    <property type="entry name" value="Cobalt-precorrin-4 Transmethylase, Domain 1"/>
    <property type="match status" value="1"/>
</dbReference>
<dbReference type="Gene3D" id="3.30.950.10">
    <property type="entry name" value="Methyltransferase, Cobalt-precorrin-4 Transmethylase, Domain 2"/>
    <property type="match status" value="1"/>
</dbReference>
<dbReference type="InterPro" id="IPR000878">
    <property type="entry name" value="4pyrrol_Mease"/>
</dbReference>
<dbReference type="InterPro" id="IPR035996">
    <property type="entry name" value="4pyrrol_Methylase_sf"/>
</dbReference>
<dbReference type="InterPro" id="IPR014777">
    <property type="entry name" value="4pyrrole_Mease_sub1"/>
</dbReference>
<dbReference type="InterPro" id="IPR014776">
    <property type="entry name" value="4pyrrole_Mease_sub2"/>
</dbReference>
<dbReference type="InterPro" id="IPR012382">
    <property type="entry name" value="CobI/CbiL"/>
</dbReference>
<dbReference type="InterPro" id="IPR006364">
    <property type="entry name" value="CobI/CbiL/CobIJ_dom"/>
</dbReference>
<dbReference type="InterPro" id="IPR003043">
    <property type="entry name" value="Uropor_MeTrfase_CS"/>
</dbReference>
<dbReference type="NCBIfam" id="TIGR01467">
    <property type="entry name" value="cobI_cbiL"/>
    <property type="match status" value="1"/>
</dbReference>
<dbReference type="PANTHER" id="PTHR43467">
    <property type="entry name" value="COBALT-PRECORRIN-2 C(20)-METHYLTRANSFERASE"/>
    <property type="match status" value="1"/>
</dbReference>
<dbReference type="PANTHER" id="PTHR43467:SF2">
    <property type="entry name" value="COBALT-PRECORRIN-2 C(20)-METHYLTRANSFERASE"/>
    <property type="match status" value="1"/>
</dbReference>
<dbReference type="Pfam" id="PF00590">
    <property type="entry name" value="TP_methylase"/>
    <property type="match status" value="1"/>
</dbReference>
<dbReference type="PIRSF" id="PIRSF036427">
    <property type="entry name" value="Precrrn-2_mtase"/>
    <property type="match status" value="1"/>
</dbReference>
<dbReference type="SUPFAM" id="SSF53790">
    <property type="entry name" value="Tetrapyrrole methylase"/>
    <property type="match status" value="1"/>
</dbReference>
<dbReference type="PROSITE" id="PS00840">
    <property type="entry name" value="SUMT_2"/>
    <property type="match status" value="1"/>
</dbReference>
<accession>Q58181</accession>
<keyword id="KW-0169">Cobalamin biosynthesis</keyword>
<keyword id="KW-0489">Methyltransferase</keyword>
<keyword id="KW-1185">Reference proteome</keyword>
<keyword id="KW-0949">S-adenosyl-L-methionine</keyword>
<keyword id="KW-0808">Transferase</keyword>
<feature type="chain" id="PRO_0000150411" description="Probable cobalt-precorrin-2 C(20)-methyltransferase">
    <location>
        <begin position="1"/>
        <end position="230"/>
    </location>
</feature>
<protein>
    <recommendedName>
        <fullName>Probable cobalt-precorrin-2 C(20)-methyltransferase</fullName>
        <ecNumber>2.1.1.151</ecNumber>
    </recommendedName>
    <alternativeName>
        <fullName>S-adenosyl-L-methionine--cobalt-precorrin-2 methyltransferase</fullName>
    </alternativeName>
</protein>
<comment type="function">
    <text evidence="1">Methylates cobalt-precorrin-2 at the C-20 position to produce cobalt-precorrin-3A in the anaerobic cobalamin biosynthesis pathway.</text>
</comment>
<comment type="catalytic activity">
    <reaction>
        <text>Co-precorrin-2 + S-adenosyl-L-methionine = Co-precorrin-3 + S-adenosyl-L-homocysteine + H(+)</text>
        <dbReference type="Rhea" id="RHEA:17997"/>
        <dbReference type="ChEBI" id="CHEBI:15378"/>
        <dbReference type="ChEBI" id="CHEBI:57856"/>
        <dbReference type="ChEBI" id="CHEBI:59789"/>
        <dbReference type="ChEBI" id="CHEBI:60053"/>
        <dbReference type="ChEBI" id="CHEBI:60060"/>
        <dbReference type="EC" id="2.1.1.151"/>
    </reaction>
</comment>
<comment type="pathway">
    <text>Cofactor biosynthesis; adenosylcobalamin biosynthesis; cob(II)yrinate a,c-diamide from sirohydrochlorin (anaerobic route): step 2/10.</text>
</comment>
<comment type="similarity">
    <text evidence="2">Belongs to the precorrin methyltransferase family.</text>
</comment>
<name>CBIL_METJA</name>
<sequence length="230" mass="26267">MNKLVKKVYGVGVGVGDKKLLTLKALEVLKKVDKIFVPVSKKGKKSIAYEIIKDYVDGKNIEELLFPMIKDKERLKKYWENALEKVLKEDGEVAIITIGDPTLYSTFSYVWKLLKERGVEVEIVNGISSIFASAAALNIPLVEGDEKLCILPQGKDLEKYIDEFDTIIIMKTKNLNEKLSVIKNRDDYIIGLVKRATFEDEKVVIGKLDEINFDEFNDYLSLAIIKRFKR</sequence>
<reference key="1">
    <citation type="journal article" date="1996" name="Science">
        <title>Complete genome sequence of the methanogenic archaeon, Methanococcus jannaschii.</title>
        <authorList>
            <person name="Bult C.J."/>
            <person name="White O."/>
            <person name="Olsen G.J."/>
            <person name="Zhou L."/>
            <person name="Fleischmann R.D."/>
            <person name="Sutton G.G."/>
            <person name="Blake J.A."/>
            <person name="FitzGerald L.M."/>
            <person name="Clayton R.A."/>
            <person name="Gocayne J.D."/>
            <person name="Kerlavage A.R."/>
            <person name="Dougherty B.A."/>
            <person name="Tomb J.-F."/>
            <person name="Adams M.D."/>
            <person name="Reich C.I."/>
            <person name="Overbeek R."/>
            <person name="Kirkness E.F."/>
            <person name="Weinstock K.G."/>
            <person name="Merrick J.M."/>
            <person name="Glodek A."/>
            <person name="Scott J.L."/>
            <person name="Geoghagen N.S.M."/>
            <person name="Weidman J.F."/>
            <person name="Fuhrmann J.L."/>
            <person name="Nguyen D."/>
            <person name="Utterback T.R."/>
            <person name="Kelley J.M."/>
            <person name="Peterson J.D."/>
            <person name="Sadow P.W."/>
            <person name="Hanna M.C."/>
            <person name="Cotton M.D."/>
            <person name="Roberts K.M."/>
            <person name="Hurst M.A."/>
            <person name="Kaine B.P."/>
            <person name="Borodovsky M."/>
            <person name="Klenk H.-P."/>
            <person name="Fraser C.M."/>
            <person name="Smith H.O."/>
            <person name="Woese C.R."/>
            <person name="Venter J.C."/>
        </authorList>
    </citation>
    <scope>NUCLEOTIDE SEQUENCE [LARGE SCALE GENOMIC DNA]</scope>
    <source>
        <strain>ATCC 43067 / DSM 2661 / JAL-1 / JCM 10045 / NBRC 100440</strain>
    </source>
</reference>
<gene>
    <name type="primary">cbiL</name>
    <name type="ordered locus">MJ0771</name>
</gene>